<proteinExistence type="evidence at transcript level"/>
<protein>
    <recommendedName>
        <fullName>Virulence transcriptional regulatory protein PhoP</fullName>
    </recommendedName>
</protein>
<comment type="function">
    <text evidence="5">Member of the two-component regulatory system PhoP/PhoQ which regulates the expression of genes involved in virulence, adaptation to acidic and low Mg(2+) environments and resistance to host defense antimicrobial peptides. Essential for intramacrophage survival of S.typhimurium. In low periplasmic Mg(2+), PhoQ phosphorylates PhoP, resulting in the expression of PhoP-activated genes (PAG) and repression of PhoP-repressed genes (PRG). In high periplasmic Mg(2+), PhoQ dephosphorylates phospho-PhoP, resulting in the repression of PAG and may lead to expression of some PRG. Essential for transcription of spiC inside macrophages by controlling the expression of the two-component regulatory system SsrB/SpiR (SsrA) and Pir at transcriptional and post-transcriptional levels respectively. Promotes expression of the two-component regulatory system PmrA/PmrB via activation of pmrD gene. Is required to attenuate bacterial growth within fibroblast cells and to enhance bacterial resistance to bile in intestinal cells. Negatively regulates prgH, which is required for invasion of epithelial cells. PhoP uses multiple mechanisms to promote transcription and activates promoters for PAG at low (uM range) Mg(2+) concentrations. Involved in acid tolerance (Probable).</text>
</comment>
<comment type="subunit">
    <text evidence="1">Monomer in the inactive, unphosphorylated state and dimer in the active, phosphorylated state.</text>
</comment>
<comment type="subcellular location">
    <subcellularLocation>
        <location evidence="5">Cytoplasm</location>
    </subcellularLocation>
</comment>
<comment type="induction">
    <text>The phoP/phoQ operon is positively autoregulated by both PhoP and PhoQ in a Mg(2+)-dependent manner. Repressed by RcsB via sigma factor RpoS.</text>
</comment>
<comment type="PTM">
    <text evidence="5">Phosphorylated by PhoQ.</text>
</comment>
<comment type="disruption phenotype">
    <text evidence="4">Does not grow in low Mg(2+), uncontrolled growth in mouse NRK-49F fibroblasts.</text>
</comment>
<comment type="miscellaneous">
    <text evidence="5">PhoP/PhoQ-signaling cascade, which activated virulence membrane proteins (PagC, PagO, PagD, PagK, PgtE and PhoN), is induced by cationic antimicrobial peptides (CAMP) (polymyxin, alpha-helical peptide C18G and sheet peptide protegrin-1) at sublethal concentrations.</text>
</comment>
<gene>
    <name type="primary">phoP</name>
    <name type="ordered locus">SL1344_1169</name>
</gene>
<evidence type="ECO:0000250" key="1"/>
<evidence type="ECO:0000255" key="2">
    <source>
        <dbReference type="PROSITE-ProRule" id="PRU00169"/>
    </source>
</evidence>
<evidence type="ECO:0000255" key="3">
    <source>
        <dbReference type="PROSITE-ProRule" id="PRU01091"/>
    </source>
</evidence>
<evidence type="ECO:0000269" key="4">
    <source>
    </source>
</evidence>
<evidence type="ECO:0000305" key="5"/>
<accession>E1WFA1</accession>
<accession>P14146</accession>
<organism>
    <name type="scientific">Salmonella typhimurium (strain SL1344)</name>
    <dbReference type="NCBI Taxonomy" id="216597"/>
    <lineage>
        <taxon>Bacteria</taxon>
        <taxon>Pseudomonadati</taxon>
        <taxon>Pseudomonadota</taxon>
        <taxon>Gammaproteobacteria</taxon>
        <taxon>Enterobacterales</taxon>
        <taxon>Enterobacteriaceae</taxon>
        <taxon>Salmonella</taxon>
    </lineage>
</organism>
<sequence length="224" mass="25633">MMRVLVVEDNALLRHHLKVQLQDSGHQVDAAEDAREADYYLNEHLPDIAIVDLGLPDEDGLSLIRRWRSSDVSLPVLVLTAREGWQDKVEVLSSGADDYVTKPFHIEEVMARMQALMRRNSGLASQVINIPPFQVDLSRRELSVNEEVIKLTAFEYTIMETLIRNNGKVVSKDSLMLQLYPDAELRESHTIDVLMGRLRKKIQAQYPHDVITTVRGQGYLFELR</sequence>
<keyword id="KW-0010">Activator</keyword>
<keyword id="KW-0963">Cytoplasm</keyword>
<keyword id="KW-0238">DNA-binding</keyword>
<keyword id="KW-0341">Growth regulation</keyword>
<keyword id="KW-0597">Phosphoprotein</keyword>
<keyword id="KW-0678">Repressor</keyword>
<keyword id="KW-0804">Transcription</keyword>
<keyword id="KW-0805">Transcription regulation</keyword>
<keyword id="KW-0902">Two-component regulatory system</keyword>
<keyword id="KW-0843">Virulence</keyword>
<reference key="1">
    <citation type="journal article" date="2001" name="Infect. Immun.">
        <title>Salmonella enterica serovar Typhimurium response involved in attenuation of pathogen intracellular proliferation.</title>
        <authorList>
            <person name="Cano D.A."/>
            <person name="Martinez-Moya M."/>
            <person name="Pucciarelli M.G."/>
            <person name="Groisman E.A."/>
            <person name="Casadesus J."/>
            <person name="Garcia-del Portillo F."/>
        </authorList>
    </citation>
    <scope>NUCLEOTIDE SEQUENCE [GENOMIC DNA]</scope>
    <scope>DISRUPTION PHENOTYPE</scope>
    <source>
        <strain>SL1344</strain>
    </source>
</reference>
<reference key="2">
    <citation type="journal article" date="2012" name="Proc. Natl. Acad. Sci. U.S.A.">
        <title>The transcriptional landscape and small RNAs of Salmonella enterica serovar Typhimurium.</title>
        <authorList>
            <person name="Kroger C."/>
            <person name="Dillon S.C."/>
            <person name="Cameron A.D."/>
            <person name="Papenfort K."/>
            <person name="Sivasankaran S.K."/>
            <person name="Hokamp K."/>
            <person name="Chao Y."/>
            <person name="Sittka A."/>
            <person name="Hebrard M."/>
            <person name="Handler K."/>
            <person name="Colgan A."/>
            <person name="Leekitcharoenphon P."/>
            <person name="Langridge G.C."/>
            <person name="Lohan A.J."/>
            <person name="Loftus B."/>
            <person name="Lucchini S."/>
            <person name="Ussery D.W."/>
            <person name="Dorman C.J."/>
            <person name="Thomson N.R."/>
            <person name="Vogel J."/>
            <person name="Hinton J.C."/>
        </authorList>
    </citation>
    <scope>NUCLEOTIDE SEQUENCE [LARGE SCALE GENOMIC DNA]</scope>
    <source>
        <strain>SL1344</strain>
    </source>
</reference>
<reference key="3">
    <citation type="journal article" date="2004" name="J. Bacteriol.">
        <title>The Salmonella membrane protein IgaA modulates the activity of the RcsC-YojN-RcsB and PhoP-PhoQ regulons.</title>
        <authorList>
            <person name="Tierrez A."/>
            <person name="Garcia-del Portillo F."/>
        </authorList>
    </citation>
    <scope>REGULATION BY RCSB</scope>
    <source>
        <strain>SL1344</strain>
    </source>
</reference>
<name>PHOP_SALTS</name>
<dbReference type="EMBL" id="AJ272210">
    <property type="protein sequence ID" value="CAB75591.1"/>
    <property type="molecule type" value="Genomic_DNA"/>
</dbReference>
<dbReference type="EMBL" id="FQ312003">
    <property type="protein sequence ID" value="CBW17265.1"/>
    <property type="molecule type" value="Genomic_DNA"/>
</dbReference>
<dbReference type="SMR" id="E1WFA1"/>
<dbReference type="KEGG" id="sey:SL1344_1169"/>
<dbReference type="PATRIC" id="fig|216597.6.peg.1298"/>
<dbReference type="HOGENOM" id="CLU_000445_30_1_6"/>
<dbReference type="BioCyc" id="SENT216597:SL1344_RS06080-MONOMER"/>
<dbReference type="Proteomes" id="UP000008962">
    <property type="component" value="Chromosome"/>
</dbReference>
<dbReference type="GO" id="GO:0005829">
    <property type="term" value="C:cytosol"/>
    <property type="evidence" value="ECO:0007669"/>
    <property type="project" value="TreeGrafter"/>
</dbReference>
<dbReference type="GO" id="GO:0032993">
    <property type="term" value="C:protein-DNA complex"/>
    <property type="evidence" value="ECO:0007669"/>
    <property type="project" value="TreeGrafter"/>
</dbReference>
<dbReference type="GO" id="GO:0000156">
    <property type="term" value="F:phosphorelay response regulator activity"/>
    <property type="evidence" value="ECO:0007669"/>
    <property type="project" value="TreeGrafter"/>
</dbReference>
<dbReference type="GO" id="GO:0000976">
    <property type="term" value="F:transcription cis-regulatory region binding"/>
    <property type="evidence" value="ECO:0007669"/>
    <property type="project" value="TreeGrafter"/>
</dbReference>
<dbReference type="GO" id="GO:0006355">
    <property type="term" value="P:regulation of DNA-templated transcription"/>
    <property type="evidence" value="ECO:0007669"/>
    <property type="project" value="InterPro"/>
</dbReference>
<dbReference type="CDD" id="cd19934">
    <property type="entry name" value="REC_OmpR_EcPhoP-like"/>
    <property type="match status" value="1"/>
</dbReference>
<dbReference type="CDD" id="cd00383">
    <property type="entry name" value="trans_reg_C"/>
    <property type="match status" value="1"/>
</dbReference>
<dbReference type="FunFam" id="3.40.50.2300:FF:000002">
    <property type="entry name" value="DNA-binding response regulator PhoP"/>
    <property type="match status" value="1"/>
</dbReference>
<dbReference type="FunFam" id="1.10.10.10:FF:000098">
    <property type="entry name" value="Two-component system response regulator PhoP"/>
    <property type="match status" value="1"/>
</dbReference>
<dbReference type="Gene3D" id="3.40.50.2300">
    <property type="match status" value="1"/>
</dbReference>
<dbReference type="Gene3D" id="6.10.250.690">
    <property type="match status" value="1"/>
</dbReference>
<dbReference type="Gene3D" id="1.10.10.10">
    <property type="entry name" value="Winged helix-like DNA-binding domain superfamily/Winged helix DNA-binding domain"/>
    <property type="match status" value="1"/>
</dbReference>
<dbReference type="InterPro" id="IPR011006">
    <property type="entry name" value="CheY-like_superfamily"/>
</dbReference>
<dbReference type="InterPro" id="IPR001867">
    <property type="entry name" value="OmpR/PhoB-type_DNA-bd"/>
</dbReference>
<dbReference type="InterPro" id="IPR001789">
    <property type="entry name" value="Sig_transdc_resp-reg_receiver"/>
</dbReference>
<dbReference type="InterPro" id="IPR039420">
    <property type="entry name" value="WalR-like"/>
</dbReference>
<dbReference type="InterPro" id="IPR036388">
    <property type="entry name" value="WH-like_DNA-bd_sf"/>
</dbReference>
<dbReference type="NCBIfam" id="NF008078">
    <property type="entry name" value="PRK10816.1"/>
    <property type="match status" value="1"/>
</dbReference>
<dbReference type="PANTHER" id="PTHR48111">
    <property type="entry name" value="REGULATOR OF RPOS"/>
    <property type="match status" value="1"/>
</dbReference>
<dbReference type="PANTHER" id="PTHR48111:SF71">
    <property type="entry name" value="TRANSCRIPTIONAL REGULATORY PROTEIN PHOP"/>
    <property type="match status" value="1"/>
</dbReference>
<dbReference type="Pfam" id="PF00072">
    <property type="entry name" value="Response_reg"/>
    <property type="match status" value="1"/>
</dbReference>
<dbReference type="Pfam" id="PF00486">
    <property type="entry name" value="Trans_reg_C"/>
    <property type="match status" value="1"/>
</dbReference>
<dbReference type="SMART" id="SM00448">
    <property type="entry name" value="REC"/>
    <property type="match status" value="1"/>
</dbReference>
<dbReference type="SMART" id="SM00862">
    <property type="entry name" value="Trans_reg_C"/>
    <property type="match status" value="1"/>
</dbReference>
<dbReference type="SUPFAM" id="SSF52172">
    <property type="entry name" value="CheY-like"/>
    <property type="match status" value="1"/>
</dbReference>
<dbReference type="PROSITE" id="PS51755">
    <property type="entry name" value="OMPR_PHOB"/>
    <property type="match status" value="1"/>
</dbReference>
<dbReference type="PROSITE" id="PS50110">
    <property type="entry name" value="RESPONSE_REGULATORY"/>
    <property type="match status" value="1"/>
</dbReference>
<feature type="chain" id="PRO_0000424528" description="Virulence transcriptional regulatory protein PhoP">
    <location>
        <begin position="1"/>
        <end position="224"/>
    </location>
</feature>
<feature type="domain" description="Response regulatory" evidence="2">
    <location>
        <begin position="3"/>
        <end position="117"/>
    </location>
</feature>
<feature type="DNA-binding region" description="OmpR/PhoB-type" evidence="3">
    <location>
        <begin position="125"/>
        <end position="223"/>
    </location>
</feature>
<feature type="modified residue" description="4-aspartylphosphate" evidence="2">
    <location>
        <position position="52"/>
    </location>
</feature>